<sequence length="29" mass="3170">MDIVSLAWAALMVVFTFSLSLVVWGRSGL</sequence>
<name>PETN_CAPBU</name>
<evidence type="ECO:0000255" key="1">
    <source>
        <dbReference type="HAMAP-Rule" id="MF_00395"/>
    </source>
</evidence>
<protein>
    <recommendedName>
        <fullName evidence="1">Cytochrome b6-f complex subunit 8</fullName>
    </recommendedName>
    <alternativeName>
        <fullName evidence="1">Cytochrome b6-f complex subunit PetN</fullName>
    </alternativeName>
    <alternativeName>
        <fullName evidence="1">Cytochrome b6-f complex subunit VIII</fullName>
    </alternativeName>
</protein>
<feature type="chain" id="PRO_0000355425" description="Cytochrome b6-f complex subunit 8">
    <location>
        <begin position="1"/>
        <end position="29"/>
    </location>
</feature>
<feature type="transmembrane region" description="Helical" evidence="1">
    <location>
        <begin position="3"/>
        <end position="23"/>
    </location>
</feature>
<keyword id="KW-0150">Chloroplast</keyword>
<keyword id="KW-0249">Electron transport</keyword>
<keyword id="KW-0472">Membrane</keyword>
<keyword id="KW-0602">Photosynthesis</keyword>
<keyword id="KW-0934">Plastid</keyword>
<keyword id="KW-0793">Thylakoid</keyword>
<keyword id="KW-0812">Transmembrane</keyword>
<keyword id="KW-1133">Transmembrane helix</keyword>
<keyword id="KW-0813">Transport</keyword>
<reference key="1">
    <citation type="submission" date="2007-03" db="EMBL/GenBank/DDBJ databases">
        <title>Sequencing analysis of Capsella bursa-pastoris JO22 chloroplast DNA.</title>
        <authorList>
            <person name="Hosouchi T."/>
            <person name="Tsuruoka H."/>
            <person name="Kotani H."/>
        </authorList>
    </citation>
    <scope>NUCLEOTIDE SEQUENCE [LARGE SCALE GENOMIC DNA]</scope>
</reference>
<gene>
    <name evidence="1" type="primary">petN</name>
</gene>
<organism>
    <name type="scientific">Capsella bursa-pastoris</name>
    <name type="common">Shepherd's purse</name>
    <name type="synonym">Thlaspi bursa-pastoris</name>
    <dbReference type="NCBI Taxonomy" id="3719"/>
    <lineage>
        <taxon>Eukaryota</taxon>
        <taxon>Viridiplantae</taxon>
        <taxon>Streptophyta</taxon>
        <taxon>Embryophyta</taxon>
        <taxon>Tracheophyta</taxon>
        <taxon>Spermatophyta</taxon>
        <taxon>Magnoliopsida</taxon>
        <taxon>eudicotyledons</taxon>
        <taxon>Gunneridae</taxon>
        <taxon>Pentapetalae</taxon>
        <taxon>rosids</taxon>
        <taxon>malvids</taxon>
        <taxon>Brassicales</taxon>
        <taxon>Brassicaceae</taxon>
        <taxon>Camelineae</taxon>
        <taxon>Capsella</taxon>
    </lineage>
</organism>
<dbReference type="EMBL" id="AP009371">
    <property type="protein sequence ID" value="BAF50190.1"/>
    <property type="molecule type" value="Genomic_DNA"/>
</dbReference>
<dbReference type="RefSeq" id="YP_001123366.1">
    <property type="nucleotide sequence ID" value="NC_009270.1"/>
</dbReference>
<dbReference type="SMR" id="A4QKI5"/>
<dbReference type="GeneID" id="4961642"/>
<dbReference type="GO" id="GO:0009535">
    <property type="term" value="C:chloroplast thylakoid membrane"/>
    <property type="evidence" value="ECO:0007669"/>
    <property type="project" value="UniProtKB-SubCell"/>
</dbReference>
<dbReference type="GO" id="GO:0009512">
    <property type="term" value="C:cytochrome b6f complex"/>
    <property type="evidence" value="ECO:0007669"/>
    <property type="project" value="InterPro"/>
</dbReference>
<dbReference type="GO" id="GO:0045158">
    <property type="term" value="F:electron transporter, transferring electrons within cytochrome b6/f complex of photosystem II activity"/>
    <property type="evidence" value="ECO:0007669"/>
    <property type="project" value="InterPro"/>
</dbReference>
<dbReference type="GO" id="GO:0017004">
    <property type="term" value="P:cytochrome complex assembly"/>
    <property type="evidence" value="ECO:0007669"/>
    <property type="project" value="UniProtKB-UniRule"/>
</dbReference>
<dbReference type="GO" id="GO:0015979">
    <property type="term" value="P:photosynthesis"/>
    <property type="evidence" value="ECO:0007669"/>
    <property type="project" value="UniProtKB-KW"/>
</dbReference>
<dbReference type="HAMAP" id="MF_00395">
    <property type="entry name" value="Cytb6_f_PetN"/>
    <property type="match status" value="1"/>
</dbReference>
<dbReference type="InterPro" id="IPR036143">
    <property type="entry name" value="Cytochr_b6-f_cplx_su8_sf"/>
</dbReference>
<dbReference type="InterPro" id="IPR005497">
    <property type="entry name" value="Cytochrome_b6-f_cplx_su8"/>
</dbReference>
<dbReference type="Pfam" id="PF03742">
    <property type="entry name" value="PetN"/>
    <property type="match status" value="1"/>
</dbReference>
<dbReference type="SUPFAM" id="SSF103451">
    <property type="entry name" value="PetN subunit of the cytochrome b6f complex"/>
    <property type="match status" value="1"/>
</dbReference>
<comment type="function">
    <text evidence="1">Component of the cytochrome b6-f complex, which mediates electron transfer between photosystem II (PSII) and photosystem I (PSI), cyclic electron flow around PSI, and state transitions.</text>
</comment>
<comment type="subunit">
    <text evidence="1">The 4 large subunits of the cytochrome b6-f complex are cytochrome b6, subunit IV (17 kDa polypeptide, PetD), cytochrome f and the Rieske protein, while the 4 small subunits are PetG, PetL, PetM and PetN. The complex functions as a dimer.</text>
</comment>
<comment type="subcellular location">
    <subcellularLocation>
        <location evidence="1">Plastid</location>
        <location evidence="1">Chloroplast thylakoid membrane</location>
        <topology evidence="1">Single-pass membrane protein</topology>
    </subcellularLocation>
</comment>
<comment type="similarity">
    <text evidence="1">Belongs to the PetN family.</text>
</comment>
<accession>A4QKI5</accession>
<proteinExistence type="inferred from homology"/>
<geneLocation type="chloroplast"/>